<evidence type="ECO:0000255" key="1">
    <source>
        <dbReference type="HAMAP-Rule" id="MF_01346"/>
    </source>
</evidence>
<comment type="function">
    <text evidence="1">Produces ATP from ADP in the presence of a proton gradient across the membrane. The alpha chain is a regulatory subunit.</text>
</comment>
<comment type="catalytic activity">
    <reaction evidence="1">
        <text>ATP + H2O + 4 H(+)(in) = ADP + phosphate + 5 H(+)(out)</text>
        <dbReference type="Rhea" id="RHEA:57720"/>
        <dbReference type="ChEBI" id="CHEBI:15377"/>
        <dbReference type="ChEBI" id="CHEBI:15378"/>
        <dbReference type="ChEBI" id="CHEBI:30616"/>
        <dbReference type="ChEBI" id="CHEBI:43474"/>
        <dbReference type="ChEBI" id="CHEBI:456216"/>
        <dbReference type="EC" id="7.1.2.2"/>
    </reaction>
</comment>
<comment type="subunit">
    <text evidence="1">F-type ATPases have 2 components, CF(1) - the catalytic core - and CF(0) - the membrane proton channel. CF(1) has five subunits: alpha(3), beta(3), gamma(1), delta(1), epsilon(1). CF(0) has three main subunits: a(1), b(2) and c(9-12). The alpha and beta chains form an alternating ring which encloses part of the gamma chain. CF(1) is attached to CF(0) by a central stalk formed by the gamma and epsilon chains, while a peripheral stalk is formed by the delta and b chains.</text>
</comment>
<comment type="subcellular location">
    <subcellularLocation>
        <location evidence="1">Cell inner membrane</location>
        <topology evidence="1">Peripheral membrane protein</topology>
    </subcellularLocation>
</comment>
<comment type="similarity">
    <text evidence="1">Belongs to the ATPase alpha/beta chains family.</text>
</comment>
<organism>
    <name type="scientific">Gluconobacter oxydans (strain 621H)</name>
    <name type="common">Gluconobacter suboxydans</name>
    <dbReference type="NCBI Taxonomy" id="290633"/>
    <lineage>
        <taxon>Bacteria</taxon>
        <taxon>Pseudomonadati</taxon>
        <taxon>Pseudomonadota</taxon>
        <taxon>Alphaproteobacteria</taxon>
        <taxon>Acetobacterales</taxon>
        <taxon>Acetobacteraceae</taxon>
        <taxon>Gluconobacter</taxon>
    </lineage>
</organism>
<accession>Q5FNY6</accession>
<sequence>MPDTDQAASWLASARSSLTDISVGPRTDRTGRVEDIGDGIALISGLPDAKLDELLSFGNGRYGFVHGLEEDSIGCILLNNEGTIEAGDAVQGTSGVVSVPVGPGLLGRVVDPLGRPLDGKGPVEAETWFPVERPAPAIIDRELVTEPVQTGTLAIDTLFPIGRGQRELIVGDRATGKTTIAVDAILAQKSNDMICVYVAIGQKTSSVQRVIETIRTRGNPDRCIIVVARPAEAPGLCWIAPFAAMSMAEYFRDRGQHALLVIDDLSKHAATHREVSLLTGRPPGREAYPGDIFYVHARLLERAAKLSAAKGGGSLTALPVAETEAGNLSAYIPTNLISITDGQIVLNRTLFDQGQKPAVDVGVSVSRVGGAAQSPILRSSVGTLRLDYAQFIELEAFTRFGGLPDTHVRQQLARGACIRATLRQGPHAPLDLLQEVALVTASQNGLLDGVTAKNIRTIQSGLGDYLRSNASEISTAIESGGVLSAEQKERFVACLRQYVEPRASAAS</sequence>
<proteinExistence type="inferred from homology"/>
<dbReference type="EC" id="7.1.2.2" evidence="1"/>
<dbReference type="EMBL" id="CP000009">
    <property type="protein sequence ID" value="AAW61910.1"/>
    <property type="molecule type" value="Genomic_DNA"/>
</dbReference>
<dbReference type="RefSeq" id="WP_011253686.1">
    <property type="nucleotide sequence ID" value="NC_006677.1"/>
</dbReference>
<dbReference type="SMR" id="Q5FNY6"/>
<dbReference type="STRING" id="290633.GOX2174"/>
<dbReference type="KEGG" id="gox:GOX2174"/>
<dbReference type="eggNOG" id="COG0056">
    <property type="taxonomic scope" value="Bacteria"/>
</dbReference>
<dbReference type="HOGENOM" id="CLU_010091_2_1_5"/>
<dbReference type="Proteomes" id="UP000006375">
    <property type="component" value="Chromosome"/>
</dbReference>
<dbReference type="GO" id="GO:0005886">
    <property type="term" value="C:plasma membrane"/>
    <property type="evidence" value="ECO:0007669"/>
    <property type="project" value="UniProtKB-SubCell"/>
</dbReference>
<dbReference type="GO" id="GO:0045259">
    <property type="term" value="C:proton-transporting ATP synthase complex"/>
    <property type="evidence" value="ECO:0007669"/>
    <property type="project" value="UniProtKB-KW"/>
</dbReference>
<dbReference type="GO" id="GO:0043531">
    <property type="term" value="F:ADP binding"/>
    <property type="evidence" value="ECO:0007669"/>
    <property type="project" value="TreeGrafter"/>
</dbReference>
<dbReference type="GO" id="GO:0005524">
    <property type="term" value="F:ATP binding"/>
    <property type="evidence" value="ECO:0007669"/>
    <property type="project" value="UniProtKB-UniRule"/>
</dbReference>
<dbReference type="GO" id="GO:0046933">
    <property type="term" value="F:proton-transporting ATP synthase activity, rotational mechanism"/>
    <property type="evidence" value="ECO:0007669"/>
    <property type="project" value="UniProtKB-UniRule"/>
</dbReference>
<dbReference type="CDD" id="cd18113">
    <property type="entry name" value="ATP-synt_F1_alpha_C"/>
    <property type="match status" value="1"/>
</dbReference>
<dbReference type="CDD" id="cd18116">
    <property type="entry name" value="ATP-synt_F1_alpha_N"/>
    <property type="match status" value="1"/>
</dbReference>
<dbReference type="CDD" id="cd01132">
    <property type="entry name" value="F1-ATPase_alpha_CD"/>
    <property type="match status" value="1"/>
</dbReference>
<dbReference type="FunFam" id="3.40.50.300:FF:000002">
    <property type="entry name" value="ATP synthase subunit alpha"/>
    <property type="match status" value="1"/>
</dbReference>
<dbReference type="Gene3D" id="2.40.30.20">
    <property type="match status" value="1"/>
</dbReference>
<dbReference type="Gene3D" id="1.20.150.20">
    <property type="entry name" value="ATP synthase alpha/beta chain, C-terminal domain"/>
    <property type="match status" value="1"/>
</dbReference>
<dbReference type="Gene3D" id="3.40.50.300">
    <property type="entry name" value="P-loop containing nucleotide triphosphate hydrolases"/>
    <property type="match status" value="1"/>
</dbReference>
<dbReference type="HAMAP" id="MF_01346">
    <property type="entry name" value="ATP_synth_alpha_bact"/>
    <property type="match status" value="1"/>
</dbReference>
<dbReference type="InterPro" id="IPR023366">
    <property type="entry name" value="ATP_synth_asu-like_sf"/>
</dbReference>
<dbReference type="InterPro" id="IPR000793">
    <property type="entry name" value="ATP_synth_asu_C"/>
</dbReference>
<dbReference type="InterPro" id="IPR038376">
    <property type="entry name" value="ATP_synth_asu_C_sf"/>
</dbReference>
<dbReference type="InterPro" id="IPR033732">
    <property type="entry name" value="ATP_synth_F1_a_nt-bd_dom"/>
</dbReference>
<dbReference type="InterPro" id="IPR005294">
    <property type="entry name" value="ATP_synth_F1_asu"/>
</dbReference>
<dbReference type="InterPro" id="IPR020003">
    <property type="entry name" value="ATPase_a/bsu_AS"/>
</dbReference>
<dbReference type="InterPro" id="IPR004100">
    <property type="entry name" value="ATPase_F1/V1/A1_a/bsu_N"/>
</dbReference>
<dbReference type="InterPro" id="IPR036121">
    <property type="entry name" value="ATPase_F1/V1/A1_a/bsu_N_sf"/>
</dbReference>
<dbReference type="InterPro" id="IPR000194">
    <property type="entry name" value="ATPase_F1/V1/A1_a/bsu_nucl-bd"/>
</dbReference>
<dbReference type="InterPro" id="IPR027417">
    <property type="entry name" value="P-loop_NTPase"/>
</dbReference>
<dbReference type="NCBIfam" id="TIGR00962">
    <property type="entry name" value="atpA"/>
    <property type="match status" value="1"/>
</dbReference>
<dbReference type="NCBIfam" id="NF009884">
    <property type="entry name" value="PRK13343.1"/>
    <property type="match status" value="1"/>
</dbReference>
<dbReference type="PANTHER" id="PTHR48082">
    <property type="entry name" value="ATP SYNTHASE SUBUNIT ALPHA, MITOCHONDRIAL"/>
    <property type="match status" value="1"/>
</dbReference>
<dbReference type="PANTHER" id="PTHR48082:SF2">
    <property type="entry name" value="ATP SYNTHASE SUBUNIT ALPHA, MITOCHONDRIAL"/>
    <property type="match status" value="1"/>
</dbReference>
<dbReference type="Pfam" id="PF00006">
    <property type="entry name" value="ATP-synt_ab"/>
    <property type="match status" value="1"/>
</dbReference>
<dbReference type="Pfam" id="PF00306">
    <property type="entry name" value="ATP-synt_ab_C"/>
    <property type="match status" value="1"/>
</dbReference>
<dbReference type="Pfam" id="PF02874">
    <property type="entry name" value="ATP-synt_ab_N"/>
    <property type="match status" value="1"/>
</dbReference>
<dbReference type="SUPFAM" id="SSF47917">
    <property type="entry name" value="C-terminal domain of alpha and beta subunits of F1 ATP synthase"/>
    <property type="match status" value="1"/>
</dbReference>
<dbReference type="SUPFAM" id="SSF50615">
    <property type="entry name" value="N-terminal domain of alpha and beta subunits of F1 ATP synthase"/>
    <property type="match status" value="1"/>
</dbReference>
<dbReference type="SUPFAM" id="SSF52540">
    <property type="entry name" value="P-loop containing nucleoside triphosphate hydrolases"/>
    <property type="match status" value="1"/>
</dbReference>
<dbReference type="PROSITE" id="PS00152">
    <property type="entry name" value="ATPASE_ALPHA_BETA"/>
    <property type="match status" value="1"/>
</dbReference>
<protein>
    <recommendedName>
        <fullName evidence="1">ATP synthase subunit alpha 2</fullName>
        <ecNumber evidence="1">7.1.2.2</ecNumber>
    </recommendedName>
    <alternativeName>
        <fullName evidence="1">ATP synthase F1 sector subunit alpha 2</fullName>
    </alternativeName>
    <alternativeName>
        <fullName evidence="1">F-ATPase subunit alpha 2</fullName>
    </alternativeName>
</protein>
<feature type="chain" id="PRO_0000238257" description="ATP synthase subunit alpha 2">
    <location>
        <begin position="1"/>
        <end position="507"/>
    </location>
</feature>
<feature type="binding site" evidence="1">
    <location>
        <begin position="171"/>
        <end position="178"/>
    </location>
    <ligand>
        <name>ATP</name>
        <dbReference type="ChEBI" id="CHEBI:30616"/>
    </ligand>
</feature>
<feature type="site" description="Required for activity" evidence="1">
    <location>
        <position position="364"/>
    </location>
</feature>
<gene>
    <name evidence="1" type="primary">atpA2</name>
    <name type="ordered locus">GOX2174</name>
</gene>
<name>ATPA2_GLUOX</name>
<keyword id="KW-0066">ATP synthesis</keyword>
<keyword id="KW-0067">ATP-binding</keyword>
<keyword id="KW-0997">Cell inner membrane</keyword>
<keyword id="KW-1003">Cell membrane</keyword>
<keyword id="KW-0139">CF(1)</keyword>
<keyword id="KW-0375">Hydrogen ion transport</keyword>
<keyword id="KW-0406">Ion transport</keyword>
<keyword id="KW-0472">Membrane</keyword>
<keyword id="KW-0547">Nucleotide-binding</keyword>
<keyword id="KW-1185">Reference proteome</keyword>
<keyword id="KW-1278">Translocase</keyword>
<keyword id="KW-0813">Transport</keyword>
<reference key="1">
    <citation type="journal article" date="2005" name="Nat. Biotechnol.">
        <title>Complete genome sequence of the acetic acid bacterium Gluconobacter oxydans.</title>
        <authorList>
            <person name="Prust C."/>
            <person name="Hoffmeister M."/>
            <person name="Liesegang H."/>
            <person name="Wiezer A."/>
            <person name="Fricke W.F."/>
            <person name="Ehrenreich A."/>
            <person name="Gottschalk G."/>
            <person name="Deppenmeier U."/>
        </authorList>
    </citation>
    <scope>NUCLEOTIDE SEQUENCE [LARGE SCALE GENOMIC DNA]</scope>
    <source>
        <strain>621H</strain>
    </source>
</reference>